<reference key="1">
    <citation type="submission" date="2007-10" db="EMBL/GenBank/DDBJ databases">
        <title>Brucella canis ATCC 23365 whole genome shotgun sequencing project.</title>
        <authorList>
            <person name="Setubal J.C."/>
            <person name="Bowns C."/>
            <person name="Boyle S."/>
            <person name="Crasta O.R."/>
            <person name="Czar M.J."/>
            <person name="Dharmanolla C."/>
            <person name="Gillespie J.J."/>
            <person name="Kenyon R.W."/>
            <person name="Lu J."/>
            <person name="Mane S."/>
            <person name="Mohapatra S."/>
            <person name="Nagrani S."/>
            <person name="Purkayastha A."/>
            <person name="Rajasimha H.K."/>
            <person name="Shallom J.M."/>
            <person name="Shallom S."/>
            <person name="Shukla M."/>
            <person name="Snyder E.E."/>
            <person name="Sobral B.W."/>
            <person name="Wattam A.R."/>
            <person name="Will R."/>
            <person name="Williams K."/>
            <person name="Yoo H."/>
            <person name="Bruce D."/>
            <person name="Detter C."/>
            <person name="Munk C."/>
            <person name="Brettin T.S."/>
        </authorList>
    </citation>
    <scope>NUCLEOTIDE SEQUENCE [LARGE SCALE GENOMIC DNA]</scope>
    <source>
        <strain>ATCC 23365 / NCTC 10854 / RM-666</strain>
    </source>
</reference>
<sequence>MAKKVAGQLKLQVPAGAANPSPPIGPALGQRGINIMEFCKAFNAASQEMEKGSPIPVLITYYQDKSFTFVMKTPPVTYFLKKAANLKSGSKTPGKASAGTITRDKVRAIAEAKMKDLNAADVEAAMRMIEGSARSMGLEVVG</sequence>
<keyword id="KW-0488">Methylation</keyword>
<keyword id="KW-1185">Reference proteome</keyword>
<keyword id="KW-0687">Ribonucleoprotein</keyword>
<keyword id="KW-0689">Ribosomal protein</keyword>
<keyword id="KW-0694">RNA-binding</keyword>
<keyword id="KW-0699">rRNA-binding</keyword>
<gene>
    <name evidence="1" type="primary">rplK</name>
    <name type="ordered locus">BCAN_A1270</name>
</gene>
<organism>
    <name type="scientific">Brucella canis (strain ATCC 23365 / NCTC 10854 / RM-666)</name>
    <dbReference type="NCBI Taxonomy" id="483179"/>
    <lineage>
        <taxon>Bacteria</taxon>
        <taxon>Pseudomonadati</taxon>
        <taxon>Pseudomonadota</taxon>
        <taxon>Alphaproteobacteria</taxon>
        <taxon>Hyphomicrobiales</taxon>
        <taxon>Brucellaceae</taxon>
        <taxon>Brucella/Ochrobactrum group</taxon>
        <taxon>Brucella</taxon>
    </lineage>
</organism>
<dbReference type="EMBL" id="CP000872">
    <property type="protein sequence ID" value="ABX62319.1"/>
    <property type="molecule type" value="Genomic_DNA"/>
</dbReference>
<dbReference type="RefSeq" id="WP_002964374.1">
    <property type="nucleotide sequence ID" value="NC_010103.1"/>
</dbReference>
<dbReference type="SMR" id="A9M5R4"/>
<dbReference type="GeneID" id="97533513"/>
<dbReference type="KEGG" id="bcs:BCAN_A1270"/>
<dbReference type="HOGENOM" id="CLU_074237_2_0_5"/>
<dbReference type="PhylomeDB" id="A9M5R4"/>
<dbReference type="Proteomes" id="UP000001385">
    <property type="component" value="Chromosome I"/>
</dbReference>
<dbReference type="GO" id="GO:0022625">
    <property type="term" value="C:cytosolic large ribosomal subunit"/>
    <property type="evidence" value="ECO:0007669"/>
    <property type="project" value="TreeGrafter"/>
</dbReference>
<dbReference type="GO" id="GO:0070180">
    <property type="term" value="F:large ribosomal subunit rRNA binding"/>
    <property type="evidence" value="ECO:0007669"/>
    <property type="project" value="UniProtKB-UniRule"/>
</dbReference>
<dbReference type="GO" id="GO:0003735">
    <property type="term" value="F:structural constituent of ribosome"/>
    <property type="evidence" value="ECO:0007669"/>
    <property type="project" value="InterPro"/>
</dbReference>
<dbReference type="GO" id="GO:0006412">
    <property type="term" value="P:translation"/>
    <property type="evidence" value="ECO:0007669"/>
    <property type="project" value="UniProtKB-UniRule"/>
</dbReference>
<dbReference type="CDD" id="cd00349">
    <property type="entry name" value="Ribosomal_L11"/>
    <property type="match status" value="1"/>
</dbReference>
<dbReference type="FunFam" id="1.10.10.250:FF:000001">
    <property type="entry name" value="50S ribosomal protein L11"/>
    <property type="match status" value="1"/>
</dbReference>
<dbReference type="FunFam" id="3.30.1550.10:FF:000001">
    <property type="entry name" value="50S ribosomal protein L11"/>
    <property type="match status" value="1"/>
</dbReference>
<dbReference type="Gene3D" id="1.10.10.250">
    <property type="entry name" value="Ribosomal protein L11, C-terminal domain"/>
    <property type="match status" value="1"/>
</dbReference>
<dbReference type="Gene3D" id="3.30.1550.10">
    <property type="entry name" value="Ribosomal protein L11/L12, N-terminal domain"/>
    <property type="match status" value="1"/>
</dbReference>
<dbReference type="HAMAP" id="MF_00736">
    <property type="entry name" value="Ribosomal_uL11"/>
    <property type="match status" value="1"/>
</dbReference>
<dbReference type="InterPro" id="IPR000911">
    <property type="entry name" value="Ribosomal_uL11"/>
</dbReference>
<dbReference type="InterPro" id="IPR006519">
    <property type="entry name" value="Ribosomal_uL11_bac-typ"/>
</dbReference>
<dbReference type="InterPro" id="IPR020783">
    <property type="entry name" value="Ribosomal_uL11_C"/>
</dbReference>
<dbReference type="InterPro" id="IPR036769">
    <property type="entry name" value="Ribosomal_uL11_C_sf"/>
</dbReference>
<dbReference type="InterPro" id="IPR020785">
    <property type="entry name" value="Ribosomal_uL11_CS"/>
</dbReference>
<dbReference type="InterPro" id="IPR020784">
    <property type="entry name" value="Ribosomal_uL11_N"/>
</dbReference>
<dbReference type="InterPro" id="IPR036796">
    <property type="entry name" value="Ribosomal_uL11_N_sf"/>
</dbReference>
<dbReference type="NCBIfam" id="TIGR01632">
    <property type="entry name" value="L11_bact"/>
    <property type="match status" value="1"/>
</dbReference>
<dbReference type="PANTHER" id="PTHR11661">
    <property type="entry name" value="60S RIBOSOMAL PROTEIN L12"/>
    <property type="match status" value="1"/>
</dbReference>
<dbReference type="PANTHER" id="PTHR11661:SF1">
    <property type="entry name" value="LARGE RIBOSOMAL SUBUNIT PROTEIN UL11M"/>
    <property type="match status" value="1"/>
</dbReference>
<dbReference type="Pfam" id="PF00298">
    <property type="entry name" value="Ribosomal_L11"/>
    <property type="match status" value="1"/>
</dbReference>
<dbReference type="Pfam" id="PF03946">
    <property type="entry name" value="Ribosomal_L11_N"/>
    <property type="match status" value="1"/>
</dbReference>
<dbReference type="SMART" id="SM00649">
    <property type="entry name" value="RL11"/>
    <property type="match status" value="1"/>
</dbReference>
<dbReference type="SUPFAM" id="SSF54747">
    <property type="entry name" value="Ribosomal L11/L12e N-terminal domain"/>
    <property type="match status" value="1"/>
</dbReference>
<dbReference type="SUPFAM" id="SSF46906">
    <property type="entry name" value="Ribosomal protein L11, C-terminal domain"/>
    <property type="match status" value="1"/>
</dbReference>
<dbReference type="PROSITE" id="PS00359">
    <property type="entry name" value="RIBOSOMAL_L11"/>
    <property type="match status" value="1"/>
</dbReference>
<evidence type="ECO:0000255" key="1">
    <source>
        <dbReference type="HAMAP-Rule" id="MF_00736"/>
    </source>
</evidence>
<evidence type="ECO:0000305" key="2"/>
<feature type="chain" id="PRO_1000083369" description="Large ribosomal subunit protein uL11">
    <location>
        <begin position="1"/>
        <end position="142"/>
    </location>
</feature>
<comment type="function">
    <text evidence="1">Forms part of the ribosomal stalk which helps the ribosome interact with GTP-bound translation factors.</text>
</comment>
<comment type="subunit">
    <text evidence="1">Part of the ribosomal stalk of the 50S ribosomal subunit. Interacts with L10 and the large rRNA to form the base of the stalk. L10 forms an elongated spine to which L12 dimers bind in a sequential fashion forming a multimeric L10(L12)X complex.</text>
</comment>
<comment type="PTM">
    <text evidence="1">One or more lysine residues are methylated.</text>
</comment>
<comment type="similarity">
    <text evidence="1">Belongs to the universal ribosomal protein uL11 family.</text>
</comment>
<accession>A9M5R4</accession>
<protein>
    <recommendedName>
        <fullName evidence="1">Large ribosomal subunit protein uL11</fullName>
    </recommendedName>
    <alternativeName>
        <fullName evidence="2">50S ribosomal protein L11</fullName>
    </alternativeName>
</protein>
<proteinExistence type="inferred from homology"/>
<name>RL11_BRUC2</name>